<name>GRPE_TROWT</name>
<organism>
    <name type="scientific">Tropheryma whipplei (strain Twist)</name>
    <name type="common">Whipple's bacillus</name>
    <dbReference type="NCBI Taxonomy" id="203267"/>
    <lineage>
        <taxon>Bacteria</taxon>
        <taxon>Bacillati</taxon>
        <taxon>Actinomycetota</taxon>
        <taxon>Actinomycetes</taxon>
        <taxon>Micrococcales</taxon>
        <taxon>Tropherymataceae</taxon>
        <taxon>Tropheryma</taxon>
    </lineage>
</organism>
<protein>
    <recommendedName>
        <fullName evidence="1">Protein GrpE</fullName>
    </recommendedName>
    <alternativeName>
        <fullName evidence="1">HSP-70 cofactor</fullName>
    </alternativeName>
</protein>
<reference key="1">
    <citation type="journal article" date="2003" name="Genome Res.">
        <title>Tropheryma whipplei twist: a human pathogenic Actinobacteria with a reduced genome.</title>
        <authorList>
            <person name="Raoult D."/>
            <person name="Ogata H."/>
            <person name="Audic S."/>
            <person name="Robert C."/>
            <person name="Suhre K."/>
            <person name="Drancourt M."/>
            <person name="Claverie J.-M."/>
        </authorList>
    </citation>
    <scope>NUCLEOTIDE SEQUENCE [LARGE SCALE GENOMIC DNA]</scope>
    <source>
        <strain>Twist</strain>
    </source>
</reference>
<accession>Q83MQ1</accession>
<gene>
    <name evidence="1" type="primary">grpE</name>
    <name type="ordered locus">TWT_749</name>
</gene>
<feature type="chain" id="PRO_0000113889" description="Protein GrpE">
    <location>
        <begin position="1"/>
        <end position="189"/>
    </location>
</feature>
<feature type="region of interest" description="Disordered" evidence="2">
    <location>
        <begin position="1"/>
        <end position="54"/>
    </location>
</feature>
<feature type="compositionally biased region" description="Basic and acidic residues" evidence="2">
    <location>
        <begin position="1"/>
        <end position="38"/>
    </location>
</feature>
<evidence type="ECO:0000255" key="1">
    <source>
        <dbReference type="HAMAP-Rule" id="MF_01151"/>
    </source>
</evidence>
<evidence type="ECO:0000256" key="2">
    <source>
        <dbReference type="SAM" id="MobiDB-lite"/>
    </source>
</evidence>
<sequence>MTKSNETERMEESEETHSSDIRSASESDHASGSDHTESADEIPTADAEQGELEQLEKLKDDLARERAAFHNFRMARAKQAEIERDRTRSEVIRVILPVLDDFARIEKHSTLDDPFKAVVTKLRSAMEKIGLTAFGNPGDPFNPELHEALFQNPSPDVQTETVQDVIEAGYCLGETVIRAAKVVVQVPNG</sequence>
<comment type="function">
    <text evidence="1">Participates actively in the response to hyperosmotic and heat shock by preventing the aggregation of stress-denatured proteins, in association with DnaK and GrpE. It is the nucleotide exchange factor for DnaK and may function as a thermosensor. Unfolded proteins bind initially to DnaJ; upon interaction with the DnaJ-bound protein, DnaK hydrolyzes its bound ATP, resulting in the formation of a stable complex. GrpE releases ADP from DnaK; ATP binding to DnaK triggers the release of the substrate protein, thus completing the reaction cycle. Several rounds of ATP-dependent interactions between DnaJ, DnaK and GrpE are required for fully efficient folding.</text>
</comment>
<comment type="subunit">
    <text evidence="1">Homodimer.</text>
</comment>
<comment type="subcellular location">
    <subcellularLocation>
        <location evidence="1">Cytoplasm</location>
    </subcellularLocation>
</comment>
<comment type="similarity">
    <text evidence="1">Belongs to the GrpE family.</text>
</comment>
<dbReference type="EMBL" id="AE014184">
    <property type="protein sequence ID" value="AAO44846.1"/>
    <property type="molecule type" value="Genomic_DNA"/>
</dbReference>
<dbReference type="RefSeq" id="WP_011102764.1">
    <property type="nucleotide sequence ID" value="NC_004572.3"/>
</dbReference>
<dbReference type="SMR" id="Q83MQ1"/>
<dbReference type="STRING" id="203267.TWT_749"/>
<dbReference type="KEGG" id="twh:TWT_749"/>
<dbReference type="eggNOG" id="COG0576">
    <property type="taxonomic scope" value="Bacteria"/>
</dbReference>
<dbReference type="HOGENOM" id="CLU_057217_4_0_11"/>
<dbReference type="OrthoDB" id="5191115at2"/>
<dbReference type="Proteomes" id="UP000002200">
    <property type="component" value="Chromosome"/>
</dbReference>
<dbReference type="GO" id="GO:0005737">
    <property type="term" value="C:cytoplasm"/>
    <property type="evidence" value="ECO:0007669"/>
    <property type="project" value="UniProtKB-SubCell"/>
</dbReference>
<dbReference type="GO" id="GO:0000774">
    <property type="term" value="F:adenyl-nucleotide exchange factor activity"/>
    <property type="evidence" value="ECO:0007669"/>
    <property type="project" value="InterPro"/>
</dbReference>
<dbReference type="GO" id="GO:0042803">
    <property type="term" value="F:protein homodimerization activity"/>
    <property type="evidence" value="ECO:0007669"/>
    <property type="project" value="InterPro"/>
</dbReference>
<dbReference type="GO" id="GO:0051087">
    <property type="term" value="F:protein-folding chaperone binding"/>
    <property type="evidence" value="ECO:0007669"/>
    <property type="project" value="InterPro"/>
</dbReference>
<dbReference type="GO" id="GO:0051082">
    <property type="term" value="F:unfolded protein binding"/>
    <property type="evidence" value="ECO:0007669"/>
    <property type="project" value="TreeGrafter"/>
</dbReference>
<dbReference type="GO" id="GO:0006457">
    <property type="term" value="P:protein folding"/>
    <property type="evidence" value="ECO:0007669"/>
    <property type="project" value="InterPro"/>
</dbReference>
<dbReference type="CDD" id="cd00446">
    <property type="entry name" value="GrpE"/>
    <property type="match status" value="1"/>
</dbReference>
<dbReference type="Gene3D" id="3.90.20.20">
    <property type="match status" value="1"/>
</dbReference>
<dbReference type="Gene3D" id="2.30.22.10">
    <property type="entry name" value="Head domain of nucleotide exchange factor GrpE"/>
    <property type="match status" value="1"/>
</dbReference>
<dbReference type="HAMAP" id="MF_01151">
    <property type="entry name" value="GrpE"/>
    <property type="match status" value="1"/>
</dbReference>
<dbReference type="InterPro" id="IPR000740">
    <property type="entry name" value="GrpE"/>
</dbReference>
<dbReference type="InterPro" id="IPR013805">
    <property type="entry name" value="GrpE_coiled_coil"/>
</dbReference>
<dbReference type="InterPro" id="IPR009012">
    <property type="entry name" value="GrpE_head"/>
</dbReference>
<dbReference type="PANTHER" id="PTHR21237">
    <property type="entry name" value="GRPE PROTEIN"/>
    <property type="match status" value="1"/>
</dbReference>
<dbReference type="PANTHER" id="PTHR21237:SF23">
    <property type="entry name" value="GRPE PROTEIN HOMOLOG, MITOCHONDRIAL"/>
    <property type="match status" value="1"/>
</dbReference>
<dbReference type="Pfam" id="PF01025">
    <property type="entry name" value="GrpE"/>
    <property type="match status" value="1"/>
</dbReference>
<dbReference type="PRINTS" id="PR00773">
    <property type="entry name" value="GRPEPROTEIN"/>
</dbReference>
<dbReference type="SUPFAM" id="SSF58014">
    <property type="entry name" value="Coiled-coil domain of nucleotide exchange factor GrpE"/>
    <property type="match status" value="1"/>
</dbReference>
<dbReference type="SUPFAM" id="SSF51064">
    <property type="entry name" value="Head domain of nucleotide exchange factor GrpE"/>
    <property type="match status" value="1"/>
</dbReference>
<dbReference type="PROSITE" id="PS01071">
    <property type="entry name" value="GRPE"/>
    <property type="match status" value="1"/>
</dbReference>
<keyword id="KW-0143">Chaperone</keyword>
<keyword id="KW-0963">Cytoplasm</keyword>
<keyword id="KW-1185">Reference proteome</keyword>
<keyword id="KW-0346">Stress response</keyword>
<proteinExistence type="inferred from homology"/>